<dbReference type="EC" id="2.4.99.17" evidence="1"/>
<dbReference type="EMBL" id="CP000738">
    <property type="protein sequence ID" value="ABR60117.1"/>
    <property type="molecule type" value="Genomic_DNA"/>
</dbReference>
<dbReference type="RefSeq" id="WP_011975428.1">
    <property type="nucleotide sequence ID" value="NC_009636.1"/>
</dbReference>
<dbReference type="RefSeq" id="YP_001326952.1">
    <property type="nucleotide sequence ID" value="NC_009636.1"/>
</dbReference>
<dbReference type="SMR" id="A6U8Y7"/>
<dbReference type="STRING" id="366394.Smed_1267"/>
<dbReference type="GeneID" id="61611995"/>
<dbReference type="KEGG" id="smd:Smed_1267"/>
<dbReference type="PATRIC" id="fig|366394.8.peg.4402"/>
<dbReference type="eggNOG" id="COG0809">
    <property type="taxonomic scope" value="Bacteria"/>
</dbReference>
<dbReference type="HOGENOM" id="CLU_039110_1_1_5"/>
<dbReference type="OrthoDB" id="9805933at2"/>
<dbReference type="UniPathway" id="UPA00392"/>
<dbReference type="Proteomes" id="UP000001108">
    <property type="component" value="Chromosome"/>
</dbReference>
<dbReference type="GO" id="GO:0005737">
    <property type="term" value="C:cytoplasm"/>
    <property type="evidence" value="ECO:0007669"/>
    <property type="project" value="UniProtKB-SubCell"/>
</dbReference>
<dbReference type="GO" id="GO:0051075">
    <property type="term" value="F:S-adenosylmethionine:tRNA ribosyltransferase-isomerase activity"/>
    <property type="evidence" value="ECO:0007669"/>
    <property type="project" value="UniProtKB-EC"/>
</dbReference>
<dbReference type="GO" id="GO:0008616">
    <property type="term" value="P:queuosine biosynthetic process"/>
    <property type="evidence" value="ECO:0007669"/>
    <property type="project" value="UniProtKB-UniRule"/>
</dbReference>
<dbReference type="GO" id="GO:0002099">
    <property type="term" value="P:tRNA wobble guanine modification"/>
    <property type="evidence" value="ECO:0007669"/>
    <property type="project" value="TreeGrafter"/>
</dbReference>
<dbReference type="Gene3D" id="2.40.10.240">
    <property type="entry name" value="QueA-like"/>
    <property type="match status" value="1"/>
</dbReference>
<dbReference type="Gene3D" id="3.40.1780.10">
    <property type="entry name" value="QueA-like"/>
    <property type="match status" value="1"/>
</dbReference>
<dbReference type="HAMAP" id="MF_00113">
    <property type="entry name" value="QueA"/>
    <property type="match status" value="1"/>
</dbReference>
<dbReference type="InterPro" id="IPR003699">
    <property type="entry name" value="QueA"/>
</dbReference>
<dbReference type="InterPro" id="IPR042118">
    <property type="entry name" value="QueA_dom1"/>
</dbReference>
<dbReference type="InterPro" id="IPR042119">
    <property type="entry name" value="QueA_dom2"/>
</dbReference>
<dbReference type="InterPro" id="IPR036100">
    <property type="entry name" value="QueA_sf"/>
</dbReference>
<dbReference type="NCBIfam" id="NF001140">
    <property type="entry name" value="PRK00147.1"/>
    <property type="match status" value="1"/>
</dbReference>
<dbReference type="NCBIfam" id="TIGR00113">
    <property type="entry name" value="queA"/>
    <property type="match status" value="1"/>
</dbReference>
<dbReference type="PANTHER" id="PTHR30307">
    <property type="entry name" value="S-ADENOSYLMETHIONINE:TRNA RIBOSYLTRANSFERASE-ISOMERASE"/>
    <property type="match status" value="1"/>
</dbReference>
<dbReference type="PANTHER" id="PTHR30307:SF0">
    <property type="entry name" value="S-ADENOSYLMETHIONINE:TRNA RIBOSYLTRANSFERASE-ISOMERASE"/>
    <property type="match status" value="1"/>
</dbReference>
<dbReference type="Pfam" id="PF02547">
    <property type="entry name" value="Queuosine_synth"/>
    <property type="match status" value="1"/>
</dbReference>
<dbReference type="SUPFAM" id="SSF111337">
    <property type="entry name" value="QueA-like"/>
    <property type="match status" value="1"/>
</dbReference>
<feature type="chain" id="PRO_1000015280" description="S-adenosylmethionine:tRNA ribosyltransferase-isomerase">
    <location>
        <begin position="1"/>
        <end position="360"/>
    </location>
</feature>
<protein>
    <recommendedName>
        <fullName evidence="1">S-adenosylmethionine:tRNA ribosyltransferase-isomerase</fullName>
        <ecNumber evidence="1">2.4.99.17</ecNumber>
    </recommendedName>
    <alternativeName>
        <fullName evidence="1">Queuosine biosynthesis protein QueA</fullName>
    </alternativeName>
</protein>
<comment type="function">
    <text evidence="1">Transfers and isomerizes the ribose moiety from AdoMet to the 7-aminomethyl group of 7-deazaguanine (preQ1-tRNA) to give epoxyqueuosine (oQ-tRNA).</text>
</comment>
<comment type="catalytic activity">
    <reaction evidence="1">
        <text>7-aminomethyl-7-carbaguanosine(34) in tRNA + S-adenosyl-L-methionine = epoxyqueuosine(34) in tRNA + adenine + L-methionine + 2 H(+)</text>
        <dbReference type="Rhea" id="RHEA:32155"/>
        <dbReference type="Rhea" id="RHEA-COMP:10342"/>
        <dbReference type="Rhea" id="RHEA-COMP:18582"/>
        <dbReference type="ChEBI" id="CHEBI:15378"/>
        <dbReference type="ChEBI" id="CHEBI:16708"/>
        <dbReference type="ChEBI" id="CHEBI:57844"/>
        <dbReference type="ChEBI" id="CHEBI:59789"/>
        <dbReference type="ChEBI" id="CHEBI:82833"/>
        <dbReference type="ChEBI" id="CHEBI:194443"/>
        <dbReference type="EC" id="2.4.99.17"/>
    </reaction>
</comment>
<comment type="pathway">
    <text evidence="1">tRNA modification; tRNA-queuosine biosynthesis.</text>
</comment>
<comment type="subunit">
    <text evidence="1">Monomer.</text>
</comment>
<comment type="subcellular location">
    <subcellularLocation>
        <location evidence="1">Cytoplasm</location>
    </subcellularLocation>
</comment>
<comment type="similarity">
    <text evidence="1">Belongs to the QueA family.</text>
</comment>
<evidence type="ECO:0000255" key="1">
    <source>
        <dbReference type="HAMAP-Rule" id="MF_00113"/>
    </source>
</evidence>
<sequence>MRVDLFDFDLPEDSVALRPASPRDSARMLVVRPGGEPVLEDRGVLDLPSFLRQGDALVFNDTKVIPAQLEGVRYRGEHISTPVSLTLHMRVAPDRWKAFARPARRLKPGDRVSFGHGGNACLLGSLDAMVEEKGDAGEVTLRFDLSGPSLDEAIMSVGHIPLPPYIASKRADDARDRTDYQTVYAREEGAVAAPTAGLHFTDRLFAMLDEAGIERHFVTLHVGAGTFLPVKADDTDDHVMHEEIGHVDAVTAAKLNAVRERGGRVVCVGTTSLRLVESAAAEDGTIHAWSGATGIFITPGYRFRAAHMLMTNFHLPKSTLFMLVSAFAGLETMRDAYAHAIATGYRFYSYGDSSLLFRKD</sequence>
<reference key="1">
    <citation type="submission" date="2007-06" db="EMBL/GenBank/DDBJ databases">
        <title>Complete sequence of Sinorhizobium medicae WSM419 chromosome.</title>
        <authorList>
            <consortium name="US DOE Joint Genome Institute"/>
            <person name="Copeland A."/>
            <person name="Lucas S."/>
            <person name="Lapidus A."/>
            <person name="Barry K."/>
            <person name="Glavina del Rio T."/>
            <person name="Dalin E."/>
            <person name="Tice H."/>
            <person name="Pitluck S."/>
            <person name="Chain P."/>
            <person name="Malfatti S."/>
            <person name="Shin M."/>
            <person name="Vergez L."/>
            <person name="Schmutz J."/>
            <person name="Larimer F."/>
            <person name="Land M."/>
            <person name="Hauser L."/>
            <person name="Kyrpides N."/>
            <person name="Mikhailova N."/>
            <person name="Reeve W.G."/>
            <person name="Richardson P."/>
        </authorList>
    </citation>
    <scope>NUCLEOTIDE SEQUENCE [LARGE SCALE GENOMIC DNA]</scope>
    <source>
        <strain>WSM419</strain>
    </source>
</reference>
<proteinExistence type="inferred from homology"/>
<name>QUEA_SINMW</name>
<keyword id="KW-0963">Cytoplasm</keyword>
<keyword id="KW-0671">Queuosine biosynthesis</keyword>
<keyword id="KW-0949">S-adenosyl-L-methionine</keyword>
<keyword id="KW-0808">Transferase</keyword>
<organism>
    <name type="scientific">Sinorhizobium medicae (strain WSM419)</name>
    <name type="common">Ensifer medicae</name>
    <dbReference type="NCBI Taxonomy" id="366394"/>
    <lineage>
        <taxon>Bacteria</taxon>
        <taxon>Pseudomonadati</taxon>
        <taxon>Pseudomonadota</taxon>
        <taxon>Alphaproteobacteria</taxon>
        <taxon>Hyphomicrobiales</taxon>
        <taxon>Rhizobiaceae</taxon>
        <taxon>Sinorhizobium/Ensifer group</taxon>
        <taxon>Sinorhizobium</taxon>
    </lineage>
</organism>
<gene>
    <name evidence="1" type="primary">queA</name>
    <name type="ordered locus">Smed_1267</name>
</gene>
<accession>A6U8Y7</accession>